<proteinExistence type="evidence at protein level"/>
<keyword id="KW-0165">Cleavage on pair of basic residues</keyword>
<keyword id="KW-0903">Direct protein sequencing</keyword>
<keyword id="KW-0527">Neuropeptide</keyword>
<keyword id="KW-1185">Reference proteome</keyword>
<keyword id="KW-0964">Secreted</keyword>
<keyword id="KW-0732">Signal</keyword>
<feature type="signal peptide" evidence="1">
    <location>
        <begin position="1"/>
        <end position="15"/>
    </location>
</feature>
<feature type="propeptide" id="PRO_0000434250" evidence="5">
    <location>
        <begin position="16"/>
        <end position="188"/>
    </location>
</feature>
<feature type="peptide" id="PRO_0000434251" description="ITG-like peptide" evidence="2">
    <location>
        <begin position="191"/>
        <end position="199"/>
    </location>
</feature>
<feature type="propeptide" id="PRO_0000434252" evidence="5">
    <location>
        <begin position="202"/>
        <end position="205"/>
    </location>
</feature>
<evidence type="ECO:0000255" key="1"/>
<evidence type="ECO:0000269" key="2">
    <source>
    </source>
</evidence>
<evidence type="ECO:0000303" key="3">
    <source>
    </source>
</evidence>
<evidence type="ECO:0000305" key="4"/>
<evidence type="ECO:0000305" key="5">
    <source>
    </source>
</evidence>
<evidence type="ECO:0000312" key="6">
    <source>
        <dbReference type="EMBL" id="EFN68524.1"/>
    </source>
</evidence>
<protein>
    <recommendedName>
        <fullName evidence="3">ITG-like peptide</fullName>
    </recommendedName>
</protein>
<gene>
    <name evidence="6" type="ORF">EAG_09954</name>
</gene>
<comment type="subcellular location">
    <subcellularLocation>
        <location evidence="5">Secreted</location>
    </subcellularLocation>
</comment>
<comment type="tissue specificity">
    <text evidence="2">Expressed throughout the nervous system (at protein level).</text>
</comment>
<comment type="mass spectrometry"/>
<accession>E2ADG2</accession>
<reference key="1">
    <citation type="journal article" date="2010" name="Science">
        <title>Genomic comparison of the ants Camponotus floridanus and Harpegnathos saltator.</title>
        <authorList>
            <person name="Bonasio R."/>
            <person name="Zhang G."/>
            <person name="Ye C."/>
            <person name="Mutti N.S."/>
            <person name="Fang X."/>
            <person name="Qin N."/>
            <person name="Donahue G."/>
            <person name="Yang P."/>
            <person name="Li Q."/>
            <person name="Li C."/>
            <person name="Zhang P."/>
            <person name="Huang Z."/>
            <person name="Berger S.L."/>
            <person name="Reinberg D."/>
            <person name="Wang J."/>
            <person name="Liebig J."/>
        </authorList>
    </citation>
    <scope>NUCLEOTIDE SEQUENCE [LARGE SCALE GENOMIC DNA]</scope>
</reference>
<reference evidence="4" key="2">
    <citation type="journal article" date="2015" name="J. Proteome Res.">
        <title>Neuropeptidomics of the carpenter ant Camponotus floridanus.</title>
        <authorList>
            <person name="Schmitt F."/>
            <person name="Vanselow J.T."/>
            <person name="Schlosser A."/>
            <person name="Kahnt J."/>
            <person name="Roessler W."/>
            <person name="Wegener C."/>
        </authorList>
    </citation>
    <scope>PROTEIN SEQUENCE OF 191-199</scope>
    <scope>TISSUE SPECIFICITY</scope>
    <scope>MASS SPECTROMETRY</scope>
    <scope>IDENTIFICATION BY MASS SPECTROMETRY</scope>
</reference>
<organism>
    <name type="scientific">Camponotus floridanus</name>
    <name type="common">Florida carpenter ant</name>
    <dbReference type="NCBI Taxonomy" id="104421"/>
    <lineage>
        <taxon>Eukaryota</taxon>
        <taxon>Metazoa</taxon>
        <taxon>Ecdysozoa</taxon>
        <taxon>Arthropoda</taxon>
        <taxon>Hexapoda</taxon>
        <taxon>Insecta</taxon>
        <taxon>Pterygota</taxon>
        <taxon>Neoptera</taxon>
        <taxon>Endopterygota</taxon>
        <taxon>Hymenoptera</taxon>
        <taxon>Apocrita</taxon>
        <taxon>Aculeata</taxon>
        <taxon>Formicoidea</taxon>
        <taxon>Formicidae</taxon>
        <taxon>Formicinae</taxon>
        <taxon>Camponotus</taxon>
    </lineage>
</organism>
<dbReference type="EMBL" id="GL438750">
    <property type="protein sequence ID" value="EFN68524.1"/>
    <property type="molecule type" value="Genomic_DNA"/>
</dbReference>
<dbReference type="OMA" id="LCRRDND"/>
<dbReference type="OrthoDB" id="4321958at2759"/>
<dbReference type="Proteomes" id="UP000000311">
    <property type="component" value="Unassembled WGS sequence"/>
</dbReference>
<dbReference type="GO" id="GO:0005576">
    <property type="term" value="C:extracellular region"/>
    <property type="evidence" value="ECO:0007669"/>
    <property type="project" value="UniProtKB-SubCell"/>
</dbReference>
<dbReference type="GO" id="GO:0007218">
    <property type="term" value="P:neuropeptide signaling pathway"/>
    <property type="evidence" value="ECO:0007669"/>
    <property type="project" value="UniProtKB-KW"/>
</dbReference>
<sequence>MRVYAAITLVLVANTAYIGVEAWGGLFNRFSPEMLSNLGYGGHGSYMNRPGLLQEGYDGIYGEGAEPTEEPCYERKCMYNDHCCPGSICMNFNGVTGTCVSDFGMTQGELCRRDSDCETGLMCAEMSGHEECAMSSECDISRGLCCQLQRRHRQAPRKVCSYFKDPLVCIGPVATDQIKSVIQYTSGEKRITGQGNRLFKRMPFA</sequence>
<name>PROH3_CAMFO</name>